<comment type="function">
    <text evidence="1">Na(+)/H(+) antiporter that extrudes sodium in exchange for external protons.</text>
</comment>
<comment type="catalytic activity">
    <reaction evidence="1">
        <text>Na(+)(in) + 2 H(+)(out) = Na(+)(out) + 2 H(+)(in)</text>
        <dbReference type="Rhea" id="RHEA:29251"/>
        <dbReference type="ChEBI" id="CHEBI:15378"/>
        <dbReference type="ChEBI" id="CHEBI:29101"/>
    </reaction>
    <physiologicalReaction direction="left-to-right" evidence="1">
        <dbReference type="Rhea" id="RHEA:29252"/>
    </physiologicalReaction>
</comment>
<comment type="subcellular location">
    <subcellularLocation>
        <location evidence="1">Cell inner membrane</location>
        <topology evidence="1">Multi-pass membrane protein</topology>
    </subcellularLocation>
</comment>
<comment type="similarity">
    <text evidence="1">Belongs to the NhaA Na(+)/H(+) (TC 2.A.33) antiporter family.</text>
</comment>
<organism>
    <name type="scientific">Porphyromonas gingivalis (strain ATCC BAA-308 / W83)</name>
    <dbReference type="NCBI Taxonomy" id="242619"/>
    <lineage>
        <taxon>Bacteria</taxon>
        <taxon>Pseudomonadati</taxon>
        <taxon>Bacteroidota</taxon>
        <taxon>Bacteroidia</taxon>
        <taxon>Bacteroidales</taxon>
        <taxon>Porphyromonadaceae</taxon>
        <taxon>Porphyromonas</taxon>
    </lineage>
</organism>
<proteinExistence type="inferred from homology"/>
<protein>
    <recommendedName>
        <fullName evidence="1">Na(+)/H(+) antiporter NhaA</fullName>
    </recommendedName>
    <alternativeName>
        <fullName evidence="1">Sodium/proton antiporter NhaA</fullName>
    </alternativeName>
</protein>
<sequence>MKQTFRFIKPIERITHLKPNATMMLFLASVLAVIMANSSLSTIYHEILEYPINLTIGGHEVFSHHGETMTLLQFVNDVLMVIFFLAVGLEIKQEILVGELSSFKKAMLPIVGAIGGMIVPVLFFLLVVHEGPGARGAAIPMSTDIAFALAALAVLGSRVPASLKVFLTALAVADDIGGIIVIALFYSSHINIGMLAIAFGILFIMYLMGRMHVSNLGLYFVCTFFVWLFFLQSGIHTTIAGVLAAFMIPARPGLHAKNLRAEMRSLFEAMPNDKIRQSGSSLILSHNQINVINSMRKIARKAISPMQLMEEYLSPIVGYFVLPLFAFANAGITLGGVTADALWGVPMAVFLGLFVGKPLGIYFFTYGFVKMRLCPWPEGMSRLNLMAVSLFGGIGFTVSLFIATLSYAGAEHLLFLNEAKLGIFVASIFAALVGIVTLRYELNLESAKAQKS</sequence>
<keyword id="KW-0050">Antiport</keyword>
<keyword id="KW-0997">Cell inner membrane</keyword>
<keyword id="KW-1003">Cell membrane</keyword>
<keyword id="KW-0406">Ion transport</keyword>
<keyword id="KW-0472">Membrane</keyword>
<keyword id="KW-1185">Reference proteome</keyword>
<keyword id="KW-0915">Sodium</keyword>
<keyword id="KW-0739">Sodium transport</keyword>
<keyword id="KW-0812">Transmembrane</keyword>
<keyword id="KW-1133">Transmembrane helix</keyword>
<keyword id="KW-0813">Transport</keyword>
<reference key="1">
    <citation type="journal article" date="2003" name="J. Bacteriol.">
        <title>Complete genome sequence of the oral pathogenic bacterium Porphyromonas gingivalis strain W83.</title>
        <authorList>
            <person name="Nelson K.E."/>
            <person name="Fleischmann R.D."/>
            <person name="DeBoy R.T."/>
            <person name="Paulsen I.T."/>
            <person name="Fouts D.E."/>
            <person name="Eisen J.A."/>
            <person name="Daugherty S.C."/>
            <person name="Dodson R.J."/>
            <person name="Durkin A.S."/>
            <person name="Gwinn M.L."/>
            <person name="Haft D.H."/>
            <person name="Kolonay J.F."/>
            <person name="Nelson W.C."/>
            <person name="Mason T.M."/>
            <person name="Tallon L."/>
            <person name="Gray J."/>
            <person name="Granger D."/>
            <person name="Tettelin H."/>
            <person name="Dong H."/>
            <person name="Galvin J.L."/>
            <person name="Duncan M.J."/>
            <person name="Dewhirst F.E."/>
            <person name="Fraser C.M."/>
        </authorList>
    </citation>
    <scope>NUCLEOTIDE SEQUENCE [LARGE SCALE GENOMIC DNA]</scope>
    <source>
        <strain>ATCC BAA-308 / W83</strain>
    </source>
</reference>
<name>NHAA_PORGI</name>
<dbReference type="EMBL" id="AE015924">
    <property type="protein sequence ID" value="AAQ66863.1"/>
    <property type="molecule type" value="Genomic_DNA"/>
</dbReference>
<dbReference type="RefSeq" id="WP_004583540.1">
    <property type="nucleotide sequence ID" value="NC_002950.2"/>
</dbReference>
<dbReference type="SMR" id="Q7MTR7"/>
<dbReference type="STRING" id="242619.PG_1877"/>
<dbReference type="EnsemblBacteria" id="AAQ66863">
    <property type="protein sequence ID" value="AAQ66863"/>
    <property type="gene ID" value="PG_1877"/>
</dbReference>
<dbReference type="KEGG" id="pgi:PG_1877"/>
<dbReference type="eggNOG" id="COG3004">
    <property type="taxonomic scope" value="Bacteria"/>
</dbReference>
<dbReference type="HOGENOM" id="CLU_015803_1_2_10"/>
<dbReference type="Proteomes" id="UP000000588">
    <property type="component" value="Chromosome"/>
</dbReference>
<dbReference type="GO" id="GO:0005886">
    <property type="term" value="C:plasma membrane"/>
    <property type="evidence" value="ECO:0007669"/>
    <property type="project" value="UniProtKB-SubCell"/>
</dbReference>
<dbReference type="GO" id="GO:0015385">
    <property type="term" value="F:sodium:proton antiporter activity"/>
    <property type="evidence" value="ECO:0007669"/>
    <property type="project" value="TreeGrafter"/>
</dbReference>
<dbReference type="GO" id="GO:0006885">
    <property type="term" value="P:regulation of pH"/>
    <property type="evidence" value="ECO:0007669"/>
    <property type="project" value="InterPro"/>
</dbReference>
<dbReference type="Gene3D" id="1.20.1530.10">
    <property type="entry name" value="Na+/H+ antiporter like domain"/>
    <property type="match status" value="1"/>
</dbReference>
<dbReference type="HAMAP" id="MF_01844">
    <property type="entry name" value="NhaA"/>
    <property type="match status" value="1"/>
</dbReference>
<dbReference type="InterPro" id="IPR023171">
    <property type="entry name" value="Na/H_antiporter_dom_sf"/>
</dbReference>
<dbReference type="InterPro" id="IPR004670">
    <property type="entry name" value="NhaA"/>
</dbReference>
<dbReference type="NCBIfam" id="TIGR00773">
    <property type="entry name" value="NhaA"/>
    <property type="match status" value="1"/>
</dbReference>
<dbReference type="PANTHER" id="PTHR30341:SF0">
    <property type="entry name" value="NA(+)_H(+) ANTIPORTER NHAA"/>
    <property type="match status" value="1"/>
</dbReference>
<dbReference type="PANTHER" id="PTHR30341">
    <property type="entry name" value="SODIUM ION/PROTON ANTIPORTER NHAA-RELATED"/>
    <property type="match status" value="1"/>
</dbReference>
<dbReference type="Pfam" id="PF06965">
    <property type="entry name" value="Na_H_antiport_1"/>
    <property type="match status" value="1"/>
</dbReference>
<gene>
    <name evidence="1" type="primary">nhaA</name>
    <name type="ordered locus">PG_1877</name>
</gene>
<feature type="chain" id="PRO_0000334363" description="Na(+)/H(+) antiporter NhaA">
    <location>
        <begin position="1"/>
        <end position="452"/>
    </location>
</feature>
<feature type="transmembrane region" description="Helical" evidence="1">
    <location>
        <begin position="23"/>
        <end position="43"/>
    </location>
</feature>
<feature type="transmembrane region" description="Helical" evidence="1">
    <location>
        <begin position="71"/>
        <end position="91"/>
    </location>
</feature>
<feature type="transmembrane region" description="Helical" evidence="1">
    <location>
        <begin position="108"/>
        <end position="128"/>
    </location>
</feature>
<feature type="transmembrane region" description="Helical" evidence="1">
    <location>
        <begin position="136"/>
        <end position="156"/>
    </location>
</feature>
<feature type="transmembrane region" description="Helical" evidence="1">
    <location>
        <begin position="165"/>
        <end position="185"/>
    </location>
</feature>
<feature type="transmembrane region" description="Helical" evidence="1">
    <location>
        <begin position="189"/>
        <end position="209"/>
    </location>
</feature>
<feature type="transmembrane region" description="Helical" evidence="1">
    <location>
        <begin position="216"/>
        <end position="236"/>
    </location>
</feature>
<feature type="transmembrane region" description="Helical" evidence="1">
    <location>
        <begin position="316"/>
        <end position="336"/>
    </location>
</feature>
<feature type="transmembrane region" description="Helical" evidence="1">
    <location>
        <begin position="349"/>
        <end position="369"/>
    </location>
</feature>
<feature type="transmembrane region" description="Helical" evidence="1">
    <location>
        <begin position="385"/>
        <end position="405"/>
    </location>
</feature>
<feature type="transmembrane region" description="Helical" evidence="1">
    <location>
        <begin position="418"/>
        <end position="438"/>
    </location>
</feature>
<evidence type="ECO:0000255" key="1">
    <source>
        <dbReference type="HAMAP-Rule" id="MF_01844"/>
    </source>
</evidence>
<accession>Q7MTR7</accession>